<accession>Q5HAK7</accession>
<accession>Q5FDG1</accession>
<organism>
    <name type="scientific">Ehrlichia ruminantium (strain Welgevonden)</name>
    <dbReference type="NCBI Taxonomy" id="254945"/>
    <lineage>
        <taxon>Bacteria</taxon>
        <taxon>Pseudomonadati</taxon>
        <taxon>Pseudomonadota</taxon>
        <taxon>Alphaproteobacteria</taxon>
        <taxon>Rickettsiales</taxon>
        <taxon>Anaplasmataceae</taxon>
        <taxon>Ehrlichia</taxon>
    </lineage>
</organism>
<gene>
    <name evidence="1" type="primary">gmk</name>
    <name type="ordered locus">Erum6740</name>
    <name type="ordered locus">ERWE_CDS_07070</name>
</gene>
<keyword id="KW-0067">ATP-binding</keyword>
<keyword id="KW-0963">Cytoplasm</keyword>
<keyword id="KW-0418">Kinase</keyword>
<keyword id="KW-0547">Nucleotide-binding</keyword>
<keyword id="KW-0808">Transferase</keyword>
<proteinExistence type="inferred from homology"/>
<name>KGUA_EHRRW</name>
<comment type="function">
    <text evidence="1">Essential for recycling GMP and indirectly, cGMP.</text>
</comment>
<comment type="catalytic activity">
    <reaction evidence="1">
        <text>GMP + ATP = GDP + ADP</text>
        <dbReference type="Rhea" id="RHEA:20780"/>
        <dbReference type="ChEBI" id="CHEBI:30616"/>
        <dbReference type="ChEBI" id="CHEBI:58115"/>
        <dbReference type="ChEBI" id="CHEBI:58189"/>
        <dbReference type="ChEBI" id="CHEBI:456216"/>
        <dbReference type="EC" id="2.7.4.8"/>
    </reaction>
</comment>
<comment type="subcellular location">
    <subcellularLocation>
        <location evidence="1">Cytoplasm</location>
    </subcellularLocation>
</comment>
<comment type="similarity">
    <text evidence="1">Belongs to the guanylate kinase family.</text>
</comment>
<protein>
    <recommendedName>
        <fullName evidence="1">Guanylate kinase</fullName>
        <ecNumber evidence="1">2.7.4.8</ecNumber>
    </recommendedName>
    <alternativeName>
        <fullName evidence="1">GMP kinase</fullName>
    </alternativeName>
</protein>
<dbReference type="EC" id="2.7.4.8" evidence="1"/>
<dbReference type="EMBL" id="CR767821">
    <property type="protein sequence ID" value="CAH58406.1"/>
    <property type="molecule type" value="Genomic_DNA"/>
</dbReference>
<dbReference type="EMBL" id="CR925678">
    <property type="protein sequence ID" value="CAI27201.1"/>
    <property type="molecule type" value="Genomic_DNA"/>
</dbReference>
<dbReference type="RefSeq" id="WP_011155353.1">
    <property type="nucleotide sequence ID" value="NC_005295.2"/>
</dbReference>
<dbReference type="SMR" id="Q5HAK7"/>
<dbReference type="GeneID" id="33057552"/>
<dbReference type="KEGG" id="eru:Erum6740"/>
<dbReference type="KEGG" id="erw:ERWE_CDS_07070"/>
<dbReference type="eggNOG" id="COG0194">
    <property type="taxonomic scope" value="Bacteria"/>
</dbReference>
<dbReference type="HOGENOM" id="CLU_001715_1_0_5"/>
<dbReference type="Proteomes" id="UP000001021">
    <property type="component" value="Chromosome"/>
</dbReference>
<dbReference type="GO" id="GO:0005829">
    <property type="term" value="C:cytosol"/>
    <property type="evidence" value="ECO:0007669"/>
    <property type="project" value="TreeGrafter"/>
</dbReference>
<dbReference type="GO" id="GO:0005524">
    <property type="term" value="F:ATP binding"/>
    <property type="evidence" value="ECO:0007669"/>
    <property type="project" value="UniProtKB-UniRule"/>
</dbReference>
<dbReference type="GO" id="GO:0004385">
    <property type="term" value="F:guanylate kinase activity"/>
    <property type="evidence" value="ECO:0007669"/>
    <property type="project" value="UniProtKB-UniRule"/>
</dbReference>
<dbReference type="CDD" id="cd00071">
    <property type="entry name" value="GMPK"/>
    <property type="match status" value="1"/>
</dbReference>
<dbReference type="FunFam" id="3.30.63.10:FF:000002">
    <property type="entry name" value="Guanylate kinase 1"/>
    <property type="match status" value="1"/>
</dbReference>
<dbReference type="Gene3D" id="3.30.63.10">
    <property type="entry name" value="Guanylate Kinase phosphate binding domain"/>
    <property type="match status" value="1"/>
</dbReference>
<dbReference type="Gene3D" id="3.40.50.300">
    <property type="entry name" value="P-loop containing nucleotide triphosphate hydrolases"/>
    <property type="match status" value="1"/>
</dbReference>
<dbReference type="HAMAP" id="MF_00328">
    <property type="entry name" value="Guanylate_kinase"/>
    <property type="match status" value="1"/>
</dbReference>
<dbReference type="InterPro" id="IPR008145">
    <property type="entry name" value="GK/Ca_channel_bsu"/>
</dbReference>
<dbReference type="InterPro" id="IPR008144">
    <property type="entry name" value="Guanylate_kin-like_dom"/>
</dbReference>
<dbReference type="InterPro" id="IPR017665">
    <property type="entry name" value="Guanylate_kinase"/>
</dbReference>
<dbReference type="InterPro" id="IPR020590">
    <property type="entry name" value="Guanylate_kinase_CS"/>
</dbReference>
<dbReference type="InterPro" id="IPR027417">
    <property type="entry name" value="P-loop_NTPase"/>
</dbReference>
<dbReference type="NCBIfam" id="TIGR03263">
    <property type="entry name" value="guanyl_kin"/>
    <property type="match status" value="1"/>
</dbReference>
<dbReference type="PANTHER" id="PTHR23117:SF13">
    <property type="entry name" value="GUANYLATE KINASE"/>
    <property type="match status" value="1"/>
</dbReference>
<dbReference type="PANTHER" id="PTHR23117">
    <property type="entry name" value="GUANYLATE KINASE-RELATED"/>
    <property type="match status" value="1"/>
</dbReference>
<dbReference type="Pfam" id="PF00625">
    <property type="entry name" value="Guanylate_kin"/>
    <property type="match status" value="1"/>
</dbReference>
<dbReference type="SMART" id="SM00072">
    <property type="entry name" value="GuKc"/>
    <property type="match status" value="1"/>
</dbReference>
<dbReference type="SUPFAM" id="SSF52540">
    <property type="entry name" value="P-loop containing nucleoside triphosphate hydrolases"/>
    <property type="match status" value="1"/>
</dbReference>
<dbReference type="PROSITE" id="PS00856">
    <property type="entry name" value="GUANYLATE_KINASE_1"/>
    <property type="match status" value="1"/>
</dbReference>
<dbReference type="PROSITE" id="PS50052">
    <property type="entry name" value="GUANYLATE_KINASE_2"/>
    <property type="match status" value="1"/>
</dbReference>
<reference key="1">
    <citation type="journal article" date="2005" name="Proc. Natl. Acad. Sci. U.S.A.">
        <title>The genome of the heartwater agent Ehrlichia ruminantium contains multiple tandem repeats of actively variable copy number.</title>
        <authorList>
            <person name="Collins N.E."/>
            <person name="Liebenberg J."/>
            <person name="de Villiers E.P."/>
            <person name="Brayton K.A."/>
            <person name="Louw E."/>
            <person name="Pretorius A."/>
            <person name="Faber F.E."/>
            <person name="van Heerden H."/>
            <person name="Josemans A."/>
            <person name="van Kleef M."/>
            <person name="Steyn H.C."/>
            <person name="van Strijp M.F."/>
            <person name="Zweygarth E."/>
            <person name="Jongejan F."/>
            <person name="Maillard J.C."/>
            <person name="Berthier D."/>
            <person name="Botha M."/>
            <person name="Joubert F."/>
            <person name="Corton C.H."/>
            <person name="Thomson N.R."/>
            <person name="Allsopp M.T."/>
            <person name="Allsopp B.A."/>
        </authorList>
    </citation>
    <scope>NUCLEOTIDE SEQUENCE [LARGE SCALE GENOMIC DNA]</scope>
    <source>
        <strain>Welgevonden</strain>
    </source>
</reference>
<reference key="2">
    <citation type="journal article" date="2006" name="J. Bacteriol.">
        <title>Comparative genomic analysis of three strains of Ehrlichia ruminantium reveals an active process of genome size plasticity.</title>
        <authorList>
            <person name="Frutos R."/>
            <person name="Viari A."/>
            <person name="Ferraz C."/>
            <person name="Morgat A."/>
            <person name="Eychenie S."/>
            <person name="Kandassamy Y."/>
            <person name="Chantal I."/>
            <person name="Bensaid A."/>
            <person name="Coissac E."/>
            <person name="Vachiery N."/>
            <person name="Demaille J."/>
            <person name="Martinez D."/>
        </authorList>
    </citation>
    <scope>NUCLEOTIDE SEQUENCE [LARGE SCALE GENOMIC DNA]</scope>
    <source>
        <strain>Welgevonden</strain>
    </source>
</reference>
<feature type="chain" id="PRO_0000266322" description="Guanylate kinase">
    <location>
        <begin position="1"/>
        <end position="209"/>
    </location>
</feature>
<feature type="domain" description="Guanylate kinase-like" evidence="1">
    <location>
        <begin position="9"/>
        <end position="188"/>
    </location>
</feature>
<feature type="binding site" evidence="1">
    <location>
        <begin position="16"/>
        <end position="23"/>
    </location>
    <ligand>
        <name>ATP</name>
        <dbReference type="ChEBI" id="CHEBI:30616"/>
    </ligand>
</feature>
<sequence length="209" mass="24376">MNNNLKSRGIMLVMSSPSGGGKTTISQLLVNELQGEIIRSVSVTTREPRNEEVEGKDYFFVTEDEFHHLCNTNQMLEYAKVFGNYYGIPRRFVMDNINNGISILFSIDWQGAFKLIDIMSEHVVSVFILPPSMEELKRRLYNRSGESDMINQRLKEAAFEISHCYRYNYIIVNHNIEESVQQIKSIFIAEKLKTHRKMFLEQVVKSYYI</sequence>
<evidence type="ECO:0000255" key="1">
    <source>
        <dbReference type="HAMAP-Rule" id="MF_00328"/>
    </source>
</evidence>